<feature type="signal peptide" evidence="4">
    <location>
        <begin position="1"/>
        <end position="22"/>
    </location>
</feature>
<feature type="propeptide" id="PRO_0000004109" evidence="1">
    <location>
        <begin position="23"/>
        <end position="34"/>
    </location>
</feature>
<feature type="peptide" id="PRO_0000004110" description="Islet amyloid polypeptide">
    <location>
        <begin position="37"/>
        <end position="73"/>
    </location>
</feature>
<feature type="propeptide" id="PRO_0000004111" evidence="1">
    <location>
        <begin position="77"/>
        <end position="92"/>
    </location>
</feature>
<feature type="modified residue" description="Tyrosine amide" evidence="1">
    <location>
        <position position="73"/>
    </location>
</feature>
<feature type="disulfide bond" evidence="3">
    <location>
        <begin position="38"/>
        <end position="43"/>
    </location>
</feature>
<proteinExistence type="inferred from homology"/>
<name>IAPP_MESAU</name>
<accession>P23442</accession>
<organism>
    <name type="scientific">Mesocricetus auratus</name>
    <name type="common">Golden hamster</name>
    <dbReference type="NCBI Taxonomy" id="10036"/>
    <lineage>
        <taxon>Eukaryota</taxon>
        <taxon>Metazoa</taxon>
        <taxon>Chordata</taxon>
        <taxon>Craniata</taxon>
        <taxon>Vertebrata</taxon>
        <taxon>Euteleostomi</taxon>
        <taxon>Mammalia</taxon>
        <taxon>Eutheria</taxon>
        <taxon>Euarchontoglires</taxon>
        <taxon>Glires</taxon>
        <taxon>Rodentia</taxon>
        <taxon>Myomorpha</taxon>
        <taxon>Muroidea</taxon>
        <taxon>Cricetidae</taxon>
        <taxon>Cricetinae</taxon>
        <taxon>Mesocricetus</taxon>
    </lineage>
</organism>
<gene>
    <name type="primary">IAPP</name>
</gene>
<comment type="function">
    <text evidence="2 3">Amylin/IAPP is a glucoregulatory peptide hormone that plays an important role in the regulation of energy homeostasis (By similarity). Selectively inhibits insulin-stimulated glucose utilization and glycogen deposition in muscle, while not affecting adipocyte glucose metabolism. IAPP function is mediated by the CALCR-RAMPs (AMYRs) receptor complexes. Amylin can also bind CALCR receptor in the absence of RAMPs, although it is more selective for AMYRs (By similarity).</text>
</comment>
<comment type="subunit">
    <text evidence="2 3">Can form homodimers. Interacts with IDE and INS. Interaction with INS inhibits homodimerization and fibril formation (By similarity).</text>
</comment>
<comment type="subcellular location">
    <subcellularLocation>
        <location evidence="2">Secreted</location>
    </subcellularLocation>
</comment>
<comment type="domain">
    <text evidence="1">The mature protein is largely unstructured in the absence of a cognate ligand.</text>
</comment>
<comment type="similarity">
    <text evidence="5">Belongs to the calcitonin family.</text>
</comment>
<evidence type="ECO:0000250" key="1"/>
<evidence type="ECO:0000250" key="2">
    <source>
        <dbReference type="UniProtKB" id="P10997"/>
    </source>
</evidence>
<evidence type="ECO:0000250" key="3">
    <source>
        <dbReference type="UniProtKB" id="P12969"/>
    </source>
</evidence>
<evidence type="ECO:0000255" key="4"/>
<evidence type="ECO:0000305" key="5"/>
<sequence>MHISKLPAALLIFSVALNHLKATPVRSGTNHQMDKRKCNTATCATQRLANFLVHSNNNLGPVLSPTNVGSNTYGKRSAAEIPDGDSLDLFLL</sequence>
<dbReference type="EMBL" id="X56067">
    <property type="protein sequence ID" value="CAA39545.1"/>
    <property type="molecule type" value="mRNA"/>
</dbReference>
<dbReference type="PIR" id="S13116">
    <property type="entry name" value="S13116"/>
</dbReference>
<dbReference type="RefSeq" id="NP_001268503.1">
    <property type="nucleotide sequence ID" value="NM_001281574.1"/>
</dbReference>
<dbReference type="BMRB" id="P23442"/>
<dbReference type="STRING" id="10036.ENSMAUP00000021547"/>
<dbReference type="GeneID" id="101832022"/>
<dbReference type="KEGG" id="maua:101832022"/>
<dbReference type="CTD" id="3375"/>
<dbReference type="eggNOG" id="ENOG502S4AQ">
    <property type="taxonomic scope" value="Eukaryota"/>
</dbReference>
<dbReference type="OrthoDB" id="9898100at2759"/>
<dbReference type="Proteomes" id="UP000189706">
    <property type="component" value="Unplaced"/>
</dbReference>
<dbReference type="GO" id="GO:0005615">
    <property type="term" value="C:extracellular space"/>
    <property type="evidence" value="ECO:0007669"/>
    <property type="project" value="TreeGrafter"/>
</dbReference>
<dbReference type="GO" id="GO:0005179">
    <property type="term" value="F:hormone activity"/>
    <property type="evidence" value="ECO:0000250"/>
    <property type="project" value="UniProtKB"/>
</dbReference>
<dbReference type="GO" id="GO:0048018">
    <property type="term" value="F:receptor ligand activity"/>
    <property type="evidence" value="ECO:0000250"/>
    <property type="project" value="UniProtKB"/>
</dbReference>
<dbReference type="GO" id="GO:0097647">
    <property type="term" value="P:amylin receptor signaling pathway"/>
    <property type="evidence" value="ECO:0000250"/>
    <property type="project" value="UniProtKB"/>
</dbReference>
<dbReference type="Gene3D" id="6.10.250.2190">
    <property type="match status" value="1"/>
</dbReference>
<dbReference type="InterPro" id="IPR021117">
    <property type="entry name" value="Calcitonin-like"/>
</dbReference>
<dbReference type="InterPro" id="IPR021116">
    <property type="entry name" value="Calcitonin/adrenomedullin"/>
</dbReference>
<dbReference type="InterPro" id="IPR018360">
    <property type="entry name" value="Calcitonin_CS"/>
</dbReference>
<dbReference type="InterPro" id="IPR001693">
    <property type="entry name" value="Calcitonin_peptide-like"/>
</dbReference>
<dbReference type="InterPro" id="IPR000443">
    <property type="entry name" value="IAPP"/>
</dbReference>
<dbReference type="PANTHER" id="PTHR10505">
    <property type="entry name" value="CALCITONIN-RELATED"/>
    <property type="match status" value="1"/>
</dbReference>
<dbReference type="PANTHER" id="PTHR10505:SF4">
    <property type="entry name" value="ISLET AMYLOID POLYPEPTIDE"/>
    <property type="match status" value="1"/>
</dbReference>
<dbReference type="Pfam" id="PF00214">
    <property type="entry name" value="Calc_CGRP_IAPP"/>
    <property type="match status" value="1"/>
</dbReference>
<dbReference type="PRINTS" id="PR00818">
    <property type="entry name" value="ISLETAMYLOID"/>
</dbReference>
<dbReference type="SMART" id="SM00113">
    <property type="entry name" value="CALCITONIN"/>
    <property type="match status" value="1"/>
</dbReference>
<dbReference type="PROSITE" id="PS00258">
    <property type="entry name" value="CALCITONIN"/>
    <property type="match status" value="1"/>
</dbReference>
<reference key="1">
    <citation type="journal article" date="1990" name="Nucleic Acids Res.">
        <title>Sequence of a cDNA encoding Syrian hamster islet amyloid polypeptide precursor.</title>
        <authorList>
            <person name="Nishi M."/>
            <person name="Bell G.I."/>
            <person name="Steiner D.F."/>
        </authorList>
    </citation>
    <scope>NUCLEOTIDE SEQUENCE [MRNA]</scope>
</reference>
<protein>
    <recommendedName>
        <fullName>Islet amyloid polypeptide</fullName>
        <shortName>IAPP</shortName>
    </recommendedName>
    <alternativeName>
        <fullName>Amylin</fullName>
    </alternativeName>
</protein>
<keyword id="KW-0027">Amidation</keyword>
<keyword id="KW-0034">Amyloid</keyword>
<keyword id="KW-0165">Cleavage on pair of basic residues</keyword>
<keyword id="KW-1015">Disulfide bond</keyword>
<keyword id="KW-0372">Hormone</keyword>
<keyword id="KW-1185">Reference proteome</keyword>
<keyword id="KW-0964">Secreted</keyword>
<keyword id="KW-0732">Signal</keyword>